<organism>
    <name type="scientific">Bacillus subtilis (strain 168)</name>
    <dbReference type="NCBI Taxonomy" id="224308"/>
    <lineage>
        <taxon>Bacteria</taxon>
        <taxon>Bacillati</taxon>
        <taxon>Bacillota</taxon>
        <taxon>Bacilli</taxon>
        <taxon>Bacillales</taxon>
        <taxon>Bacillaceae</taxon>
        <taxon>Bacillus</taxon>
    </lineage>
</organism>
<proteinExistence type="evidence at protein level"/>
<keyword id="KW-0002">3D-structure</keyword>
<keyword id="KW-1003">Cell membrane</keyword>
<keyword id="KW-0378">Hydrolase</keyword>
<keyword id="KW-0472">Membrane</keyword>
<keyword id="KW-1185">Reference proteome</keyword>
<keyword id="KW-0812">Transmembrane</keyword>
<keyword id="KW-1133">Transmembrane helix</keyword>
<dbReference type="EC" id="3.1.3.27" evidence="1"/>
<dbReference type="EMBL" id="AF015775">
    <property type="protein sequence ID" value="AAB72067.1"/>
    <property type="molecule type" value="Genomic_DNA"/>
</dbReference>
<dbReference type="EMBL" id="AL009126">
    <property type="protein sequence ID" value="CAB13856.1"/>
    <property type="molecule type" value="Genomic_DNA"/>
</dbReference>
<dbReference type="PIR" id="H69903">
    <property type="entry name" value="H69903"/>
</dbReference>
<dbReference type="RefSeq" id="NP_389846.1">
    <property type="nucleotide sequence ID" value="NC_000964.3"/>
</dbReference>
<dbReference type="RefSeq" id="WP_004399336.1">
    <property type="nucleotide sequence ID" value="NZ_OZ025638.1"/>
</dbReference>
<dbReference type="PDB" id="5JKI">
    <property type="method" value="X-ray"/>
    <property type="resolution" value="2.25 A"/>
    <property type="chains" value="A=1-203"/>
</dbReference>
<dbReference type="PDB" id="6FMX">
    <property type="method" value="X-ray"/>
    <property type="resolution" value="1.79 A"/>
    <property type="chains" value="A=1-203"/>
</dbReference>
<dbReference type="PDBsum" id="5JKI"/>
<dbReference type="PDBsum" id="6FMX"/>
<dbReference type="SMR" id="O34349"/>
<dbReference type="FunCoup" id="O34349">
    <property type="interactions" value="253"/>
</dbReference>
<dbReference type="STRING" id="224308.BSU19650"/>
<dbReference type="TCDB" id="9.B.105.2.3">
    <property type="family name" value="the lead resistance fusion protein (pbrbc) family"/>
</dbReference>
<dbReference type="PaxDb" id="224308-BSU19650"/>
<dbReference type="EnsemblBacteria" id="CAB13856">
    <property type="protein sequence ID" value="CAB13856"/>
    <property type="gene ID" value="BSU_19650"/>
</dbReference>
<dbReference type="GeneID" id="940034"/>
<dbReference type="KEGG" id="bsu:BSU19650"/>
<dbReference type="PATRIC" id="fig|224308.179.peg.2150"/>
<dbReference type="eggNOG" id="COG0671">
    <property type="taxonomic scope" value="Bacteria"/>
</dbReference>
<dbReference type="InParanoid" id="O34349"/>
<dbReference type="OrthoDB" id="9789113at2"/>
<dbReference type="PhylomeDB" id="O34349"/>
<dbReference type="BioCyc" id="BSUB:BSU19650-MONOMER"/>
<dbReference type="BRENDA" id="3.1.3.27">
    <property type="organism ID" value="658"/>
</dbReference>
<dbReference type="Proteomes" id="UP000001570">
    <property type="component" value="Chromosome"/>
</dbReference>
<dbReference type="GO" id="GO:0005886">
    <property type="term" value="C:plasma membrane"/>
    <property type="evidence" value="ECO:0007669"/>
    <property type="project" value="UniProtKB-SubCell"/>
</dbReference>
<dbReference type="GO" id="GO:0008962">
    <property type="term" value="F:phosphatidylglycerophosphatase activity"/>
    <property type="evidence" value="ECO:0007669"/>
    <property type="project" value="UniProtKB-EC"/>
</dbReference>
<dbReference type="CDD" id="cd03392">
    <property type="entry name" value="PAP2_like_2"/>
    <property type="match status" value="1"/>
</dbReference>
<dbReference type="Gene3D" id="1.20.144.10">
    <property type="entry name" value="Phosphatidic acid phosphatase type 2/haloperoxidase"/>
    <property type="match status" value="2"/>
</dbReference>
<dbReference type="InterPro" id="IPR036938">
    <property type="entry name" value="P_Acid_Pase_2/haloperoxi_sf"/>
</dbReference>
<dbReference type="InterPro" id="IPR000326">
    <property type="entry name" value="P_Acid_Pase_2/haloperoxidase"/>
</dbReference>
<dbReference type="PANTHER" id="PTHR14969:SF13">
    <property type="entry name" value="AT30094P"/>
    <property type="match status" value="1"/>
</dbReference>
<dbReference type="PANTHER" id="PTHR14969">
    <property type="entry name" value="SPHINGOSINE-1-PHOSPHATE PHOSPHOHYDROLASE"/>
    <property type="match status" value="1"/>
</dbReference>
<dbReference type="Pfam" id="PF01569">
    <property type="entry name" value="PAP2"/>
    <property type="match status" value="1"/>
</dbReference>
<dbReference type="SMART" id="SM00014">
    <property type="entry name" value="acidPPc"/>
    <property type="match status" value="1"/>
</dbReference>
<dbReference type="SUPFAM" id="SSF48317">
    <property type="entry name" value="Acid phosphatase/Vanadium-dependent haloperoxidase"/>
    <property type="match status" value="1"/>
</dbReference>
<protein>
    <recommendedName>
        <fullName evidence="2">Phosphatidylglycerophosphatase B</fullName>
        <ecNumber evidence="1">3.1.3.27</ecNumber>
    </recommendedName>
</protein>
<accession>O34349</accession>
<accession>Q796B5</accession>
<gene>
    <name evidence="2" type="primary">pgpB</name>
    <name type="synonym">yodM</name>
    <name type="ordered locus">BSU19650</name>
</gene>
<name>PGPB_BACSU</name>
<feature type="chain" id="PRO_0000359942" description="Phosphatidylglycerophosphatase B">
    <location>
        <begin position="1"/>
        <end position="203"/>
    </location>
</feature>
<feature type="topological domain" description="Cytoplasmic" evidence="4">
    <location>
        <position position="1"/>
    </location>
</feature>
<feature type="transmembrane region" description="Helical" evidence="1">
    <location>
        <begin position="2"/>
        <end position="17"/>
    </location>
</feature>
<feature type="topological domain" description="Extracellular" evidence="4">
    <location>
        <begin position="18"/>
        <end position="55"/>
    </location>
</feature>
<feature type="transmembrane region" description="Helical" evidence="1">
    <location>
        <begin position="56"/>
        <end position="74"/>
    </location>
</feature>
<feature type="topological domain" description="Cytoplasmic" evidence="4">
    <location>
        <begin position="75"/>
        <end position="78"/>
    </location>
</feature>
<feature type="transmembrane region" description="Helical" evidence="1">
    <location>
        <begin position="79"/>
        <end position="99"/>
    </location>
</feature>
<feature type="topological domain" description="Extracellular" evidence="4">
    <location>
        <begin position="100"/>
        <end position="119"/>
    </location>
</feature>
<feature type="transmembrane region" description="Helical" evidence="1">
    <location>
        <begin position="120"/>
        <end position="139"/>
    </location>
</feature>
<feature type="topological domain" description="Cytoplasmic" evidence="4">
    <location>
        <begin position="140"/>
        <end position="146"/>
    </location>
</feature>
<feature type="transmembrane region" description="Helical" evidence="1">
    <location>
        <begin position="147"/>
        <end position="167"/>
    </location>
</feature>
<feature type="topological domain" description="Extracellular" evidence="4">
    <location>
        <begin position="168"/>
        <end position="172"/>
    </location>
</feature>
<feature type="transmembrane region" description="Helical" evidence="1">
    <location>
        <begin position="173"/>
        <end position="196"/>
    </location>
</feature>
<feature type="topological domain" description="Cytoplasmic" evidence="4">
    <location>
        <begin position="197"/>
        <end position="203"/>
    </location>
</feature>
<feature type="region of interest" description="Phosphatase sequence motif I" evidence="3">
    <location>
        <begin position="96"/>
        <end position="104"/>
    </location>
</feature>
<feature type="region of interest" description="Phosphatase sequence motif II" evidence="3">
    <location>
        <begin position="118"/>
        <end position="121"/>
    </location>
</feature>
<feature type="region of interest" description="Phosphatase sequence motif III" evidence="3">
    <location>
        <begin position="164"/>
        <end position="175"/>
    </location>
</feature>
<feature type="active site" description="Proton donors" evidence="4">
    <location>
        <position position="121"/>
    </location>
</feature>
<feature type="active site" description="Nucleophile" evidence="4">
    <location>
        <position position="171"/>
    </location>
</feature>
<feature type="site" description="Stabilizes the active site histidine for nucleophilic attack" evidence="4">
    <location>
        <position position="175"/>
    </location>
</feature>
<feature type="helix" evidence="5">
    <location>
        <begin position="2"/>
        <end position="17"/>
    </location>
</feature>
<feature type="helix" evidence="5">
    <location>
        <begin position="21"/>
        <end position="35"/>
    </location>
</feature>
<feature type="helix" evidence="5">
    <location>
        <begin position="40"/>
        <end position="51"/>
    </location>
</feature>
<feature type="helix" evidence="5">
    <location>
        <begin position="55"/>
        <end position="73"/>
    </location>
</feature>
<feature type="helix" evidence="5">
    <location>
        <begin position="77"/>
        <end position="99"/>
    </location>
</feature>
<feature type="helix" evidence="5">
    <location>
        <begin position="120"/>
        <end position="139"/>
    </location>
</feature>
<feature type="helix" evidence="5">
    <location>
        <begin position="141"/>
        <end position="143"/>
    </location>
</feature>
<feature type="helix" evidence="5">
    <location>
        <begin position="147"/>
        <end position="167"/>
    </location>
</feature>
<feature type="helix" evidence="5">
    <location>
        <begin position="173"/>
        <end position="196"/>
    </location>
</feature>
<evidence type="ECO:0000269" key="1">
    <source>
    </source>
</evidence>
<evidence type="ECO:0000303" key="2">
    <source>
    </source>
</evidence>
<evidence type="ECO:0000305" key="3"/>
<evidence type="ECO:0000305" key="4">
    <source>
    </source>
</evidence>
<evidence type="ECO:0007829" key="5">
    <source>
        <dbReference type="PDB" id="6FMX"/>
    </source>
</evidence>
<reference key="1">
    <citation type="journal article" date="1998" name="DNA Res.">
        <title>Sequence analysis of the Bacillus subtilis 168 chromosome region between the sspC and odhA loci (184 degrees-180 degrees).</title>
        <authorList>
            <person name="Ghim S.-Y."/>
            <person name="Choi S.-K."/>
            <person name="Shin B.-S."/>
            <person name="Jeong Y.-M."/>
            <person name="Sorokin A."/>
            <person name="Ehrlich S.D."/>
            <person name="Park S.-H."/>
        </authorList>
    </citation>
    <scope>NUCLEOTIDE SEQUENCE [GENOMIC DNA]</scope>
</reference>
<reference key="2">
    <citation type="journal article" date="1997" name="Nature">
        <title>The complete genome sequence of the Gram-positive bacterium Bacillus subtilis.</title>
        <authorList>
            <person name="Kunst F."/>
            <person name="Ogasawara N."/>
            <person name="Moszer I."/>
            <person name="Albertini A.M."/>
            <person name="Alloni G."/>
            <person name="Azevedo V."/>
            <person name="Bertero M.G."/>
            <person name="Bessieres P."/>
            <person name="Bolotin A."/>
            <person name="Borchert S."/>
            <person name="Borriss R."/>
            <person name="Boursier L."/>
            <person name="Brans A."/>
            <person name="Braun M."/>
            <person name="Brignell S.C."/>
            <person name="Bron S."/>
            <person name="Brouillet S."/>
            <person name="Bruschi C.V."/>
            <person name="Caldwell B."/>
            <person name="Capuano V."/>
            <person name="Carter N.M."/>
            <person name="Choi S.-K."/>
            <person name="Codani J.-J."/>
            <person name="Connerton I.F."/>
            <person name="Cummings N.J."/>
            <person name="Daniel R.A."/>
            <person name="Denizot F."/>
            <person name="Devine K.M."/>
            <person name="Duesterhoeft A."/>
            <person name="Ehrlich S.D."/>
            <person name="Emmerson P.T."/>
            <person name="Entian K.-D."/>
            <person name="Errington J."/>
            <person name="Fabret C."/>
            <person name="Ferrari E."/>
            <person name="Foulger D."/>
            <person name="Fritz C."/>
            <person name="Fujita M."/>
            <person name="Fujita Y."/>
            <person name="Fuma S."/>
            <person name="Galizzi A."/>
            <person name="Galleron N."/>
            <person name="Ghim S.-Y."/>
            <person name="Glaser P."/>
            <person name="Goffeau A."/>
            <person name="Golightly E.J."/>
            <person name="Grandi G."/>
            <person name="Guiseppi G."/>
            <person name="Guy B.J."/>
            <person name="Haga K."/>
            <person name="Haiech J."/>
            <person name="Harwood C.R."/>
            <person name="Henaut A."/>
            <person name="Hilbert H."/>
            <person name="Holsappel S."/>
            <person name="Hosono S."/>
            <person name="Hullo M.-F."/>
            <person name="Itaya M."/>
            <person name="Jones L.-M."/>
            <person name="Joris B."/>
            <person name="Karamata D."/>
            <person name="Kasahara Y."/>
            <person name="Klaerr-Blanchard M."/>
            <person name="Klein C."/>
            <person name="Kobayashi Y."/>
            <person name="Koetter P."/>
            <person name="Koningstein G."/>
            <person name="Krogh S."/>
            <person name="Kumano M."/>
            <person name="Kurita K."/>
            <person name="Lapidus A."/>
            <person name="Lardinois S."/>
            <person name="Lauber J."/>
            <person name="Lazarevic V."/>
            <person name="Lee S.-M."/>
            <person name="Levine A."/>
            <person name="Liu H."/>
            <person name="Masuda S."/>
            <person name="Mauel C."/>
            <person name="Medigue C."/>
            <person name="Medina N."/>
            <person name="Mellado R.P."/>
            <person name="Mizuno M."/>
            <person name="Moestl D."/>
            <person name="Nakai S."/>
            <person name="Noback M."/>
            <person name="Noone D."/>
            <person name="O'Reilly M."/>
            <person name="Ogawa K."/>
            <person name="Ogiwara A."/>
            <person name="Oudega B."/>
            <person name="Park S.-H."/>
            <person name="Parro V."/>
            <person name="Pohl T.M."/>
            <person name="Portetelle D."/>
            <person name="Porwollik S."/>
            <person name="Prescott A.M."/>
            <person name="Presecan E."/>
            <person name="Pujic P."/>
            <person name="Purnelle B."/>
            <person name="Rapoport G."/>
            <person name="Rey M."/>
            <person name="Reynolds S."/>
            <person name="Rieger M."/>
            <person name="Rivolta C."/>
            <person name="Rocha E."/>
            <person name="Roche B."/>
            <person name="Rose M."/>
            <person name="Sadaie Y."/>
            <person name="Sato T."/>
            <person name="Scanlan E."/>
            <person name="Schleich S."/>
            <person name="Schroeter R."/>
            <person name="Scoffone F."/>
            <person name="Sekiguchi J."/>
            <person name="Sekowska A."/>
            <person name="Seror S.J."/>
            <person name="Serror P."/>
            <person name="Shin B.-S."/>
            <person name="Soldo B."/>
            <person name="Sorokin A."/>
            <person name="Tacconi E."/>
            <person name="Takagi T."/>
            <person name="Takahashi H."/>
            <person name="Takemaru K."/>
            <person name="Takeuchi M."/>
            <person name="Tamakoshi A."/>
            <person name="Tanaka T."/>
            <person name="Terpstra P."/>
            <person name="Tognoni A."/>
            <person name="Tosato V."/>
            <person name="Uchiyama S."/>
            <person name="Vandenbol M."/>
            <person name="Vannier F."/>
            <person name="Vassarotti A."/>
            <person name="Viari A."/>
            <person name="Wambutt R."/>
            <person name="Wedler E."/>
            <person name="Wedler H."/>
            <person name="Weitzenegger T."/>
            <person name="Winters P."/>
            <person name="Wipat A."/>
            <person name="Yamamoto H."/>
            <person name="Yamane K."/>
            <person name="Yasumoto K."/>
            <person name="Yata K."/>
            <person name="Yoshida K."/>
            <person name="Yoshikawa H.-F."/>
            <person name="Zumstein E."/>
            <person name="Yoshikawa H."/>
            <person name="Danchin A."/>
        </authorList>
    </citation>
    <scope>NUCLEOTIDE SEQUENCE [LARGE SCALE GENOMIC DNA]</scope>
    <source>
        <strain>168</strain>
    </source>
</reference>
<reference key="3">
    <citation type="journal article" date="2017" name="Cell. Mol. Life Sci.">
        <title>Crystal structure and biochemical characterization of the transmembrane PAP2 type phosphatidylglycerol phosphate phosphatase from Bacillus subtilis.</title>
        <authorList>
            <person name="Ghachi M.E."/>
            <person name="Howe N."/>
            <person name="Auger R."/>
            <person name="Lambion A."/>
            <person name="Guiseppi A."/>
            <person name="Delbrassine F."/>
            <person name="Manat G."/>
            <person name="Roure S."/>
            <person name="Peslier S."/>
            <person name="Sauvage E."/>
            <person name="Vogeley L."/>
            <person name="Rengifo-Gonzalez J.C."/>
            <person name="Charlier P."/>
            <person name="Mengin-Lecreulx D."/>
            <person name="Foglino M."/>
            <person name="Touze T."/>
            <person name="Caffrey M."/>
            <person name="Kerff F."/>
        </authorList>
    </citation>
    <scope>X-RAY CRYSTALLOGRAPHY (2.25 ANGSTROMS) OF 1-203</scope>
    <scope>FUNCTION</scope>
    <scope>CATALYTIC ACTIVITY</scope>
</reference>
<comment type="function">
    <text evidence="1">Catalyzes the dephosphorylation of phosphatidylglycerophosphate (PGP) to phosphatidylglycerol. Also has undecaprenyl pyrophosphate phosphatase activity, required for the biosynthesis of the lipid carrier undecaprenyl phosphate.</text>
</comment>
<comment type="catalytic activity">
    <reaction evidence="1">
        <text>a 1,2-diacyl-sn-glycero-3-phospho-(1'-sn-glycero-3'-phosphate) + H2O = a 1,2-diacyl-sn-glycero-3-phospho-(1'-sn-glycerol) + phosphate</text>
        <dbReference type="Rhea" id="RHEA:33751"/>
        <dbReference type="ChEBI" id="CHEBI:15377"/>
        <dbReference type="ChEBI" id="CHEBI:43474"/>
        <dbReference type="ChEBI" id="CHEBI:60110"/>
        <dbReference type="ChEBI" id="CHEBI:64716"/>
        <dbReference type="EC" id="3.1.3.27"/>
    </reaction>
</comment>
<comment type="subcellular location">
    <subcellularLocation>
        <location evidence="3">Cell membrane</location>
        <topology evidence="3">Multi-pass membrane protein</topology>
    </subcellularLocation>
</comment>
<comment type="similarity">
    <text evidence="3">Belongs to the PA-phosphatase related phosphoesterase family.</text>
</comment>
<sequence>MYKPVSLFLFFLILAAAIHTNAVQSADEAISKAAVLIRQPWLNEVMTGITHLGASSFLLPLIVIIGAGMFFYRKTWDGLLMLLVFGTDRLLNKVLKEWIERVRPDFAPLVHESSFSFPSGHSMNAACVYPVIAYFLVKHLPFLSKHKKMVYIIAGVIAVLVGISRVYLGVHFVTDVLGGFSLGLLLFFLVKGFDEKIKRFRQK</sequence>